<name>RS19_BACC3</name>
<evidence type="ECO:0000255" key="1">
    <source>
        <dbReference type="HAMAP-Rule" id="MF_00531"/>
    </source>
</evidence>
<evidence type="ECO:0000305" key="2"/>
<accession>C1ET43</accession>
<comment type="function">
    <text evidence="1">Protein S19 forms a complex with S13 that binds strongly to the 16S ribosomal RNA.</text>
</comment>
<comment type="similarity">
    <text evidence="1">Belongs to the universal ribosomal protein uS19 family.</text>
</comment>
<dbReference type="EMBL" id="CP001407">
    <property type="protein sequence ID" value="ACO31021.1"/>
    <property type="molecule type" value="Genomic_DNA"/>
</dbReference>
<dbReference type="RefSeq" id="WP_000124453.1">
    <property type="nucleotide sequence ID" value="NZ_CP009318.1"/>
</dbReference>
<dbReference type="SMR" id="C1ET43"/>
<dbReference type="GeneID" id="93010939"/>
<dbReference type="KEGG" id="bcx:BCA_0143"/>
<dbReference type="PATRIC" id="fig|572264.18.peg.178"/>
<dbReference type="Proteomes" id="UP000002210">
    <property type="component" value="Chromosome"/>
</dbReference>
<dbReference type="GO" id="GO:0005737">
    <property type="term" value="C:cytoplasm"/>
    <property type="evidence" value="ECO:0007669"/>
    <property type="project" value="UniProtKB-ARBA"/>
</dbReference>
<dbReference type="GO" id="GO:0015935">
    <property type="term" value="C:small ribosomal subunit"/>
    <property type="evidence" value="ECO:0007669"/>
    <property type="project" value="InterPro"/>
</dbReference>
<dbReference type="GO" id="GO:0019843">
    <property type="term" value="F:rRNA binding"/>
    <property type="evidence" value="ECO:0007669"/>
    <property type="project" value="UniProtKB-UniRule"/>
</dbReference>
<dbReference type="GO" id="GO:0003735">
    <property type="term" value="F:structural constituent of ribosome"/>
    <property type="evidence" value="ECO:0007669"/>
    <property type="project" value="InterPro"/>
</dbReference>
<dbReference type="GO" id="GO:0000028">
    <property type="term" value="P:ribosomal small subunit assembly"/>
    <property type="evidence" value="ECO:0007669"/>
    <property type="project" value="TreeGrafter"/>
</dbReference>
<dbReference type="GO" id="GO:0006412">
    <property type="term" value="P:translation"/>
    <property type="evidence" value="ECO:0007669"/>
    <property type="project" value="UniProtKB-UniRule"/>
</dbReference>
<dbReference type="FunFam" id="3.30.860.10:FF:000001">
    <property type="entry name" value="30S ribosomal protein S19"/>
    <property type="match status" value="1"/>
</dbReference>
<dbReference type="Gene3D" id="3.30.860.10">
    <property type="entry name" value="30s Ribosomal Protein S19, Chain A"/>
    <property type="match status" value="1"/>
</dbReference>
<dbReference type="HAMAP" id="MF_00531">
    <property type="entry name" value="Ribosomal_uS19"/>
    <property type="match status" value="1"/>
</dbReference>
<dbReference type="InterPro" id="IPR002222">
    <property type="entry name" value="Ribosomal_uS19"/>
</dbReference>
<dbReference type="InterPro" id="IPR005732">
    <property type="entry name" value="Ribosomal_uS19_bac-type"/>
</dbReference>
<dbReference type="InterPro" id="IPR020934">
    <property type="entry name" value="Ribosomal_uS19_CS"/>
</dbReference>
<dbReference type="InterPro" id="IPR023575">
    <property type="entry name" value="Ribosomal_uS19_SF"/>
</dbReference>
<dbReference type="NCBIfam" id="TIGR01050">
    <property type="entry name" value="rpsS_bact"/>
    <property type="match status" value="1"/>
</dbReference>
<dbReference type="PANTHER" id="PTHR11880">
    <property type="entry name" value="RIBOSOMAL PROTEIN S19P FAMILY MEMBER"/>
    <property type="match status" value="1"/>
</dbReference>
<dbReference type="PANTHER" id="PTHR11880:SF8">
    <property type="entry name" value="SMALL RIBOSOMAL SUBUNIT PROTEIN US19M"/>
    <property type="match status" value="1"/>
</dbReference>
<dbReference type="Pfam" id="PF00203">
    <property type="entry name" value="Ribosomal_S19"/>
    <property type="match status" value="1"/>
</dbReference>
<dbReference type="PIRSF" id="PIRSF002144">
    <property type="entry name" value="Ribosomal_S19"/>
    <property type="match status" value="1"/>
</dbReference>
<dbReference type="PRINTS" id="PR00975">
    <property type="entry name" value="RIBOSOMALS19"/>
</dbReference>
<dbReference type="SUPFAM" id="SSF54570">
    <property type="entry name" value="Ribosomal protein S19"/>
    <property type="match status" value="1"/>
</dbReference>
<dbReference type="PROSITE" id="PS00323">
    <property type="entry name" value="RIBOSOMAL_S19"/>
    <property type="match status" value="1"/>
</dbReference>
<gene>
    <name evidence="1" type="primary">rpsS</name>
    <name type="ordered locus">BCA_0143</name>
</gene>
<organism>
    <name type="scientific">Bacillus cereus (strain 03BB102)</name>
    <dbReference type="NCBI Taxonomy" id="572264"/>
    <lineage>
        <taxon>Bacteria</taxon>
        <taxon>Bacillati</taxon>
        <taxon>Bacillota</taxon>
        <taxon>Bacilli</taxon>
        <taxon>Bacillales</taxon>
        <taxon>Bacillaceae</taxon>
        <taxon>Bacillus</taxon>
        <taxon>Bacillus cereus group</taxon>
    </lineage>
</organism>
<reference key="1">
    <citation type="submission" date="2009-02" db="EMBL/GenBank/DDBJ databases">
        <title>Genome sequence of Bacillus cereus 03BB102.</title>
        <authorList>
            <person name="Dodson R.J."/>
            <person name="Jackson P."/>
            <person name="Munk A.C."/>
            <person name="Brettin T."/>
            <person name="Bruce D."/>
            <person name="Detter C."/>
            <person name="Tapia R."/>
            <person name="Han C."/>
            <person name="Sutton G."/>
            <person name="Sims D."/>
        </authorList>
    </citation>
    <scope>NUCLEOTIDE SEQUENCE [LARGE SCALE GENOMIC DNA]</scope>
    <source>
        <strain>03BB102</strain>
    </source>
</reference>
<protein>
    <recommendedName>
        <fullName evidence="1">Small ribosomal subunit protein uS19</fullName>
    </recommendedName>
    <alternativeName>
        <fullName evidence="2">30S ribosomal protein S19</fullName>
    </alternativeName>
</protein>
<sequence length="92" mass="10627">MARSLKKGPFVDDHLMSKIAKLNETEQKQVVKTWSRRSTIFPQFIGHTIAVYDGRKHVPVYVTEDMVGHKLGEFAPTRTYKGHDADDKKTRR</sequence>
<keyword id="KW-0687">Ribonucleoprotein</keyword>
<keyword id="KW-0689">Ribosomal protein</keyword>
<keyword id="KW-0694">RNA-binding</keyword>
<keyword id="KW-0699">rRNA-binding</keyword>
<feature type="chain" id="PRO_1000146366" description="Small ribosomal subunit protein uS19">
    <location>
        <begin position="1"/>
        <end position="92"/>
    </location>
</feature>
<proteinExistence type="inferred from homology"/>